<dbReference type="EC" id="2.7.4.1" evidence="1"/>
<dbReference type="EMBL" id="AE016958">
    <property type="protein sequence ID" value="AAS05570.1"/>
    <property type="molecule type" value="Genomic_DNA"/>
</dbReference>
<dbReference type="RefSeq" id="WP_010949808.1">
    <property type="nucleotide sequence ID" value="NZ_CP106873.1"/>
</dbReference>
<dbReference type="SMR" id="Q73VJ1"/>
<dbReference type="STRING" id="262316.MAP_3022"/>
<dbReference type="KEGG" id="mpa:MAP_3022"/>
<dbReference type="PATRIC" id="fig|262316.17.peg.3202"/>
<dbReference type="eggNOG" id="COG0855">
    <property type="taxonomic scope" value="Bacteria"/>
</dbReference>
<dbReference type="HOGENOM" id="CLU_009678_5_0_11"/>
<dbReference type="Proteomes" id="UP000000580">
    <property type="component" value="Chromosome"/>
</dbReference>
<dbReference type="GO" id="GO:0009358">
    <property type="term" value="C:polyphosphate kinase complex"/>
    <property type="evidence" value="ECO:0007669"/>
    <property type="project" value="InterPro"/>
</dbReference>
<dbReference type="GO" id="GO:0005524">
    <property type="term" value="F:ATP binding"/>
    <property type="evidence" value="ECO:0007669"/>
    <property type="project" value="UniProtKB-KW"/>
</dbReference>
<dbReference type="GO" id="GO:0046872">
    <property type="term" value="F:metal ion binding"/>
    <property type="evidence" value="ECO:0007669"/>
    <property type="project" value="UniProtKB-KW"/>
</dbReference>
<dbReference type="GO" id="GO:0008976">
    <property type="term" value="F:polyphosphate kinase activity"/>
    <property type="evidence" value="ECO:0007669"/>
    <property type="project" value="UniProtKB-UniRule"/>
</dbReference>
<dbReference type="GO" id="GO:0006799">
    <property type="term" value="P:polyphosphate biosynthetic process"/>
    <property type="evidence" value="ECO:0007669"/>
    <property type="project" value="UniProtKB-UniRule"/>
</dbReference>
<dbReference type="CDD" id="cd09165">
    <property type="entry name" value="PLDc_PaPPK1_C1_like"/>
    <property type="match status" value="1"/>
</dbReference>
<dbReference type="FunFam" id="3.30.1840.10:FF:000002">
    <property type="entry name" value="Polyphosphate kinase"/>
    <property type="match status" value="1"/>
</dbReference>
<dbReference type="FunFam" id="3.30.870.10:FF:000001">
    <property type="entry name" value="Polyphosphate kinase"/>
    <property type="match status" value="1"/>
</dbReference>
<dbReference type="Gene3D" id="3.30.870.10">
    <property type="entry name" value="Endonuclease Chain A"/>
    <property type="match status" value="2"/>
</dbReference>
<dbReference type="Gene3D" id="3.30.1840.10">
    <property type="entry name" value="Polyphosphate kinase middle domain"/>
    <property type="match status" value="1"/>
</dbReference>
<dbReference type="Gene3D" id="1.20.58.310">
    <property type="entry name" value="Polyphosphate kinase N-terminal domain"/>
    <property type="match status" value="1"/>
</dbReference>
<dbReference type="HAMAP" id="MF_00347">
    <property type="entry name" value="Polyphosphate_kinase"/>
    <property type="match status" value="1"/>
</dbReference>
<dbReference type="InterPro" id="IPR003414">
    <property type="entry name" value="PP_kinase"/>
</dbReference>
<dbReference type="InterPro" id="IPR041108">
    <property type="entry name" value="PP_kinase_C_1"/>
</dbReference>
<dbReference type="InterPro" id="IPR024953">
    <property type="entry name" value="PP_kinase_middle"/>
</dbReference>
<dbReference type="InterPro" id="IPR036830">
    <property type="entry name" value="PP_kinase_middle_dom_sf"/>
</dbReference>
<dbReference type="InterPro" id="IPR025200">
    <property type="entry name" value="PPK_C_dom2"/>
</dbReference>
<dbReference type="InterPro" id="IPR025198">
    <property type="entry name" value="PPK_N_dom"/>
</dbReference>
<dbReference type="InterPro" id="IPR036832">
    <property type="entry name" value="PPK_N_dom_sf"/>
</dbReference>
<dbReference type="NCBIfam" id="TIGR03705">
    <property type="entry name" value="poly_P_kin"/>
    <property type="match status" value="1"/>
</dbReference>
<dbReference type="NCBIfam" id="NF003917">
    <property type="entry name" value="PRK05443.1-1"/>
    <property type="match status" value="1"/>
</dbReference>
<dbReference type="NCBIfam" id="NF003918">
    <property type="entry name" value="PRK05443.1-2"/>
    <property type="match status" value="1"/>
</dbReference>
<dbReference type="NCBIfam" id="NF003921">
    <property type="entry name" value="PRK05443.2-2"/>
    <property type="match status" value="1"/>
</dbReference>
<dbReference type="NCBIfam" id="NF003922">
    <property type="entry name" value="PRK05443.2-3"/>
    <property type="match status" value="1"/>
</dbReference>
<dbReference type="PANTHER" id="PTHR30218">
    <property type="entry name" value="POLYPHOSPHATE KINASE"/>
    <property type="match status" value="1"/>
</dbReference>
<dbReference type="PANTHER" id="PTHR30218:SF0">
    <property type="entry name" value="POLYPHOSPHATE KINASE"/>
    <property type="match status" value="1"/>
</dbReference>
<dbReference type="Pfam" id="PF02503">
    <property type="entry name" value="PP_kinase"/>
    <property type="match status" value="1"/>
</dbReference>
<dbReference type="Pfam" id="PF13090">
    <property type="entry name" value="PP_kinase_C"/>
    <property type="match status" value="1"/>
</dbReference>
<dbReference type="Pfam" id="PF17941">
    <property type="entry name" value="PP_kinase_C_1"/>
    <property type="match status" value="1"/>
</dbReference>
<dbReference type="Pfam" id="PF13089">
    <property type="entry name" value="PP_kinase_N"/>
    <property type="match status" value="1"/>
</dbReference>
<dbReference type="PIRSF" id="PIRSF015589">
    <property type="entry name" value="PP_kinase"/>
    <property type="match status" value="1"/>
</dbReference>
<dbReference type="SUPFAM" id="SSF56024">
    <property type="entry name" value="Phospholipase D/nuclease"/>
    <property type="match status" value="2"/>
</dbReference>
<dbReference type="SUPFAM" id="SSF143724">
    <property type="entry name" value="PHP14-like"/>
    <property type="match status" value="1"/>
</dbReference>
<dbReference type="SUPFAM" id="SSF140356">
    <property type="entry name" value="PPK N-terminal domain-like"/>
    <property type="match status" value="1"/>
</dbReference>
<feature type="chain" id="PRO_1000079366" description="Polyphosphate kinase">
    <location>
        <begin position="1"/>
        <end position="730"/>
    </location>
</feature>
<feature type="region of interest" description="Disordered" evidence="2">
    <location>
        <begin position="1"/>
        <end position="39"/>
    </location>
</feature>
<feature type="compositionally biased region" description="Basic and acidic residues" evidence="2">
    <location>
        <begin position="1"/>
        <end position="21"/>
    </location>
</feature>
<feature type="active site" description="Phosphohistidine intermediate" evidence="1">
    <location>
        <position position="483"/>
    </location>
</feature>
<feature type="binding site" evidence="1">
    <location>
        <position position="86"/>
    </location>
    <ligand>
        <name>ATP</name>
        <dbReference type="ChEBI" id="CHEBI:30616"/>
    </ligand>
</feature>
<feature type="binding site" evidence="1">
    <location>
        <position position="423"/>
    </location>
    <ligand>
        <name>Mg(2+)</name>
        <dbReference type="ChEBI" id="CHEBI:18420"/>
    </ligand>
</feature>
<feature type="binding site" evidence="1">
    <location>
        <position position="453"/>
    </location>
    <ligand>
        <name>Mg(2+)</name>
        <dbReference type="ChEBI" id="CHEBI:18420"/>
    </ligand>
</feature>
<feature type="binding site" evidence="1">
    <location>
        <position position="516"/>
    </location>
    <ligand>
        <name>ATP</name>
        <dbReference type="ChEBI" id="CHEBI:30616"/>
    </ligand>
</feature>
<feature type="binding site" evidence="1">
    <location>
        <position position="612"/>
    </location>
    <ligand>
        <name>ATP</name>
        <dbReference type="ChEBI" id="CHEBI:30616"/>
    </ligand>
</feature>
<feature type="binding site" evidence="1">
    <location>
        <position position="640"/>
    </location>
    <ligand>
        <name>ATP</name>
        <dbReference type="ChEBI" id="CHEBI:30616"/>
    </ligand>
</feature>
<protein>
    <recommendedName>
        <fullName evidence="1">Polyphosphate kinase</fullName>
        <ecNumber evidence="1">2.7.4.1</ecNumber>
    </recommendedName>
    <alternativeName>
        <fullName evidence="1">ATP-polyphosphate phosphotransferase</fullName>
    </alternativeName>
    <alternativeName>
        <fullName evidence="1">Polyphosphoric acid kinase</fullName>
    </alternativeName>
</protein>
<evidence type="ECO:0000255" key="1">
    <source>
        <dbReference type="HAMAP-Rule" id="MF_00347"/>
    </source>
</evidence>
<evidence type="ECO:0000256" key="2">
    <source>
        <dbReference type="SAM" id="MobiDB-lite"/>
    </source>
</evidence>
<comment type="function">
    <text evidence="1">Catalyzes the reversible transfer of the terminal phosphate of ATP to form a long-chain polyphosphate (polyP).</text>
</comment>
<comment type="catalytic activity">
    <reaction evidence="1">
        <text>[phosphate](n) + ATP = [phosphate](n+1) + ADP</text>
        <dbReference type="Rhea" id="RHEA:19573"/>
        <dbReference type="Rhea" id="RHEA-COMP:9859"/>
        <dbReference type="Rhea" id="RHEA-COMP:14280"/>
        <dbReference type="ChEBI" id="CHEBI:16838"/>
        <dbReference type="ChEBI" id="CHEBI:30616"/>
        <dbReference type="ChEBI" id="CHEBI:456216"/>
        <dbReference type="EC" id="2.7.4.1"/>
    </reaction>
</comment>
<comment type="cofactor">
    <cofactor evidence="1">
        <name>Mg(2+)</name>
        <dbReference type="ChEBI" id="CHEBI:18420"/>
    </cofactor>
</comment>
<comment type="PTM">
    <text evidence="1">An intermediate of this reaction is the autophosphorylated ppk in which a phosphate is covalently linked to a histidine residue through a N-P bond.</text>
</comment>
<comment type="similarity">
    <text evidence="1">Belongs to the polyphosphate kinase 1 (PPK1) family.</text>
</comment>
<name>PPK1_MYCPA</name>
<organism>
    <name type="scientific">Mycolicibacterium paratuberculosis (strain ATCC BAA-968 / K-10)</name>
    <name type="common">Mycobacterium paratuberculosis</name>
    <dbReference type="NCBI Taxonomy" id="262316"/>
    <lineage>
        <taxon>Bacteria</taxon>
        <taxon>Bacillati</taxon>
        <taxon>Actinomycetota</taxon>
        <taxon>Actinomycetes</taxon>
        <taxon>Mycobacteriales</taxon>
        <taxon>Mycobacteriaceae</taxon>
        <taxon>Mycobacterium</taxon>
        <taxon>Mycobacterium avium complex (MAC)</taxon>
    </lineage>
</organism>
<gene>
    <name evidence="1" type="primary">ppk</name>
    <name type="ordered locus">MAP_3022</name>
</gene>
<reference key="1">
    <citation type="journal article" date="2005" name="Proc. Natl. Acad. Sci. U.S.A.">
        <title>The complete genome sequence of Mycobacterium avium subspecies paratuberculosis.</title>
        <authorList>
            <person name="Li L."/>
            <person name="Bannantine J.P."/>
            <person name="Zhang Q."/>
            <person name="Amonsin A."/>
            <person name="May B.J."/>
            <person name="Alt D."/>
            <person name="Banerji N."/>
            <person name="Kanjilal S."/>
            <person name="Kapur V."/>
        </authorList>
    </citation>
    <scope>NUCLEOTIDE SEQUENCE [LARGE SCALE GENOMIC DNA]</scope>
    <source>
        <strain>ATCC BAA-968 / K-10</strain>
    </source>
</reference>
<keyword id="KW-0067">ATP-binding</keyword>
<keyword id="KW-0418">Kinase</keyword>
<keyword id="KW-0460">Magnesium</keyword>
<keyword id="KW-0479">Metal-binding</keyword>
<keyword id="KW-0547">Nucleotide-binding</keyword>
<keyword id="KW-0597">Phosphoprotein</keyword>
<keyword id="KW-1185">Reference proteome</keyword>
<keyword id="KW-0808">Transferase</keyword>
<accession>Q73VJ1</accession>
<sequence>MMRHDRNVTEIDAETRPDENLWHSGDSAVGAPPAATPAAMTDLPEDRYLNRELSWLDFNARVLALADDNSLPLLERAKFLAIFASNLDEFYMVRVAGLKRRDEMGLSVRSADGLTPRKQLALIGEHTQRIATRHARVFLDSVRPALAEEGIHIVTWADLDQAERDELSTYFTEQVFPVLTPLAVDPAHPFPFVSGLSLNLAVMVRQTEDGGQHFARVKVPNNVDRFVELAAPRAGAEGENRGVVRFLPMEELIAAFLPLLFPGMEIVEHHAFRITRNADMEVEEDRDEDLLQALERELARRRFGPPVRLEIADDMTEGMLELLLRELDVHPGDVIEVPGLLDLSSLWQIYDLDRPALKDPAFVPDTHPAFADRESPKSIFATLREGDVLVHHPYDSFSTSVQRFIQQAAADPNVLAIKQTLYRTSGDSPIVRALIEAAEAGKQAVALVEIKARFDEQANIRWARALEQAGVHVVYGLVGLKTHCKTCLVVRREGSAIRRYCHIGTGNYNSKTARLYEDVGLLTAAPDIGADLTDLFNSLTGYSRKVSYRNLLVAPHGIRTGIIERVEREIAAHRERGQGRIRLKMNALVDEQVINSLYRASQAGVRVEVVVRGICALRPGVQGYSENIFVRSILGRFLEHSRIIHFRNINEFWIGSADMMHRNLDRRVEVLAQVKDPKLTAQLDELFESALDPSTRCWELGPDGQWTPSPQEGHTVRDHQVSLMERHRSP</sequence>
<proteinExistence type="inferred from homology"/>